<proteinExistence type="inferred from homology"/>
<accession>Q55244</accession>
<accession>Q31PK2</accession>
<protein>
    <recommendedName>
        <fullName>Ferric uptake regulation protein</fullName>
        <shortName>Ferric uptake regulator</shortName>
    </recommendedName>
</protein>
<name>FUR_SYNE7</name>
<reference key="1">
    <citation type="journal article" date="1996" name="Microbiology">
        <title>Fur regulates the expression of iron-stress genes in the cyanobacterium Synechococcus sp. strain PCC 7942.</title>
        <authorList>
            <person name="Ghassemian M."/>
            <person name="Straus N.A."/>
        </authorList>
    </citation>
    <scope>NUCLEOTIDE SEQUENCE [GENOMIC DNA]</scope>
</reference>
<reference key="2">
    <citation type="submission" date="2005-08" db="EMBL/GenBank/DDBJ databases">
        <title>Complete sequence of chromosome 1 of Synechococcus elongatus PCC 7942.</title>
        <authorList>
            <consortium name="US DOE Joint Genome Institute"/>
            <person name="Copeland A."/>
            <person name="Lucas S."/>
            <person name="Lapidus A."/>
            <person name="Barry K."/>
            <person name="Detter J.C."/>
            <person name="Glavina T."/>
            <person name="Hammon N."/>
            <person name="Israni S."/>
            <person name="Pitluck S."/>
            <person name="Schmutz J."/>
            <person name="Larimer F."/>
            <person name="Land M."/>
            <person name="Kyrpides N."/>
            <person name="Lykidis A."/>
            <person name="Golden S."/>
            <person name="Richardson P."/>
        </authorList>
    </citation>
    <scope>NUCLEOTIDE SEQUENCE [LARGE SCALE GENOMIC DNA]</scope>
    <source>
        <strain>ATCC 33912 / PCC 7942 / FACHB-805</strain>
    </source>
</reference>
<organism>
    <name type="scientific">Synechococcus elongatus (strain ATCC 33912 / PCC 7942 / FACHB-805)</name>
    <name type="common">Anacystis nidulans R2</name>
    <dbReference type="NCBI Taxonomy" id="1140"/>
    <lineage>
        <taxon>Bacteria</taxon>
        <taxon>Bacillati</taxon>
        <taxon>Cyanobacteriota</taxon>
        <taxon>Cyanophyceae</taxon>
        <taxon>Synechococcales</taxon>
        <taxon>Synechococcaceae</taxon>
        <taxon>Synechococcus</taxon>
    </lineage>
</organism>
<sequence length="147" mass="16845">MTYTAASLKAELNERGWRLTPQREEILRVFQNLPAGEHLSAEDLYNHLLSRNSPISLSTIYRTLKLMARMGLLRELDLAEDHKHYELNQPLKHHHHLICVSCSKTIEFKSDSVLKIGAKTSEKEGYHLLDCQLTIHGVCPTCQRSLV</sequence>
<feature type="chain" id="PRO_0000095582" description="Ferric uptake regulation protein">
    <location>
        <begin position="1"/>
        <end position="147"/>
    </location>
</feature>
<feature type="region of interest" description="DNA-binding" evidence="1">
    <location>
        <begin position="1"/>
        <end position="90"/>
    </location>
</feature>
<feature type="region of interest" description="Dimerization" evidence="1">
    <location>
        <begin position="91"/>
        <end position="147"/>
    </location>
</feature>
<feature type="binding site" evidence="1">
    <location>
        <position position="38"/>
    </location>
    <ligand>
        <name>Zn(2+)</name>
        <dbReference type="ChEBI" id="CHEBI:29105"/>
    </ligand>
</feature>
<feature type="binding site" evidence="1">
    <location>
        <position position="86"/>
    </location>
    <ligand>
        <name>Zn(2+)</name>
        <dbReference type="ChEBI" id="CHEBI:29105"/>
    </ligand>
</feature>
<feature type="binding site" evidence="1">
    <location>
        <position position="93"/>
    </location>
    <ligand>
        <name>Fe cation</name>
        <dbReference type="ChEBI" id="CHEBI:24875"/>
    </ligand>
</feature>
<feature type="binding site" evidence="1">
    <location>
        <position position="95"/>
    </location>
    <ligand>
        <name>Fe cation</name>
        <dbReference type="ChEBI" id="CHEBI:24875"/>
    </ligand>
</feature>
<feature type="binding site" evidence="1">
    <location>
        <position position="96"/>
    </location>
    <ligand>
        <name>Zn(2+)</name>
        <dbReference type="ChEBI" id="CHEBI:29105"/>
    </ligand>
</feature>
<feature type="binding site" evidence="1">
    <location>
        <position position="99"/>
    </location>
    <ligand>
        <name>Zn(2+)</name>
        <dbReference type="ChEBI" id="CHEBI:29105"/>
    </ligand>
</feature>
<feature type="binding site" evidence="1">
    <location>
        <position position="102"/>
    </location>
    <ligand>
        <name>Zn(2+)</name>
        <dbReference type="ChEBI" id="CHEBI:29105"/>
    </ligand>
</feature>
<feature type="binding site" evidence="1">
    <location>
        <position position="107"/>
    </location>
    <ligand>
        <name>Zn(2+)</name>
        <dbReference type="ChEBI" id="CHEBI:29105"/>
    </ligand>
</feature>
<feature type="sequence conflict" description="In Ref. 1; AAB41546." evidence="2" ref="1">
    <location>
        <begin position="66"/>
        <end position="85"/>
    </location>
</feature>
<dbReference type="EMBL" id="L41065">
    <property type="protein sequence ID" value="AAB41546.1"/>
    <property type="molecule type" value="Genomic_DNA"/>
</dbReference>
<dbReference type="EMBL" id="CP000100">
    <property type="protein sequence ID" value="ABB57017.1"/>
    <property type="molecule type" value="Genomic_DNA"/>
</dbReference>
<dbReference type="RefSeq" id="WP_011242869.1">
    <property type="nucleotide sequence ID" value="NZ_JACJTX010000003.1"/>
</dbReference>
<dbReference type="SMR" id="Q55244"/>
<dbReference type="STRING" id="1140.Synpcc7942_0987"/>
<dbReference type="PaxDb" id="1140-Synpcc7942_0987"/>
<dbReference type="KEGG" id="syf:Synpcc7942_0987"/>
<dbReference type="eggNOG" id="COG0735">
    <property type="taxonomic scope" value="Bacteria"/>
</dbReference>
<dbReference type="HOGENOM" id="CLU_096072_3_1_3"/>
<dbReference type="OrthoDB" id="8659436at2"/>
<dbReference type="BioCyc" id="SYNEL:SYNPCC7942_0987-MONOMER"/>
<dbReference type="Proteomes" id="UP000889800">
    <property type="component" value="Chromosome"/>
</dbReference>
<dbReference type="GO" id="GO:0005737">
    <property type="term" value="C:cytoplasm"/>
    <property type="evidence" value="ECO:0007669"/>
    <property type="project" value="UniProtKB-SubCell"/>
</dbReference>
<dbReference type="GO" id="GO:0003700">
    <property type="term" value="F:DNA-binding transcription factor activity"/>
    <property type="evidence" value="ECO:0007669"/>
    <property type="project" value="InterPro"/>
</dbReference>
<dbReference type="GO" id="GO:0000976">
    <property type="term" value="F:transcription cis-regulatory region binding"/>
    <property type="evidence" value="ECO:0007669"/>
    <property type="project" value="TreeGrafter"/>
</dbReference>
<dbReference type="GO" id="GO:0008270">
    <property type="term" value="F:zinc ion binding"/>
    <property type="evidence" value="ECO:0007669"/>
    <property type="project" value="TreeGrafter"/>
</dbReference>
<dbReference type="GO" id="GO:0045892">
    <property type="term" value="P:negative regulation of DNA-templated transcription"/>
    <property type="evidence" value="ECO:0007669"/>
    <property type="project" value="TreeGrafter"/>
</dbReference>
<dbReference type="GO" id="GO:1900376">
    <property type="term" value="P:regulation of secondary metabolite biosynthetic process"/>
    <property type="evidence" value="ECO:0007669"/>
    <property type="project" value="TreeGrafter"/>
</dbReference>
<dbReference type="CDD" id="cd07153">
    <property type="entry name" value="Fur_like"/>
    <property type="match status" value="1"/>
</dbReference>
<dbReference type="FunFam" id="3.30.1490.190:FF:000008">
    <property type="entry name" value="Ferric uptake regulator, Fur family"/>
    <property type="match status" value="1"/>
</dbReference>
<dbReference type="Gene3D" id="3.30.1490.190">
    <property type="match status" value="1"/>
</dbReference>
<dbReference type="Gene3D" id="1.10.10.10">
    <property type="entry name" value="Winged helix-like DNA-binding domain superfamily/Winged helix DNA-binding domain"/>
    <property type="match status" value="1"/>
</dbReference>
<dbReference type="InterPro" id="IPR002481">
    <property type="entry name" value="FUR"/>
</dbReference>
<dbReference type="InterPro" id="IPR043135">
    <property type="entry name" value="Fur_C"/>
</dbReference>
<dbReference type="InterPro" id="IPR036388">
    <property type="entry name" value="WH-like_DNA-bd_sf"/>
</dbReference>
<dbReference type="InterPro" id="IPR036390">
    <property type="entry name" value="WH_DNA-bd_sf"/>
</dbReference>
<dbReference type="PANTHER" id="PTHR33202:SF19">
    <property type="entry name" value="FERRIC UPTAKE REGULATION PROTEIN"/>
    <property type="match status" value="1"/>
</dbReference>
<dbReference type="PANTHER" id="PTHR33202">
    <property type="entry name" value="ZINC UPTAKE REGULATION PROTEIN"/>
    <property type="match status" value="1"/>
</dbReference>
<dbReference type="Pfam" id="PF01475">
    <property type="entry name" value="FUR"/>
    <property type="match status" value="1"/>
</dbReference>
<dbReference type="SUPFAM" id="SSF46785">
    <property type="entry name" value="Winged helix' DNA-binding domain"/>
    <property type="match status" value="1"/>
</dbReference>
<keyword id="KW-0963">Cytoplasm</keyword>
<keyword id="KW-0238">DNA-binding</keyword>
<keyword id="KW-0408">Iron</keyword>
<keyword id="KW-0479">Metal-binding</keyword>
<keyword id="KW-1185">Reference proteome</keyword>
<keyword id="KW-0678">Repressor</keyword>
<keyword id="KW-0804">Transcription</keyword>
<keyword id="KW-0805">Transcription regulation</keyword>
<keyword id="KW-0862">Zinc</keyword>
<comment type="function">
    <text>Acts as a global negative controlling element, employing Fe(2+) as a cofactor to bind the operator of the repressed genes. Regulates genes involved in iron scavenging or photosynthetic electron transport.</text>
</comment>
<comment type="subunit">
    <text evidence="1">Homodimer.</text>
</comment>
<comment type="subcellular location">
    <subcellularLocation>
        <location evidence="1">Cytoplasm</location>
    </subcellularLocation>
</comment>
<comment type="similarity">
    <text evidence="2">Belongs to the Fur family.</text>
</comment>
<gene>
    <name type="primary">fur</name>
    <name type="ordered locus">Synpcc7942_0987</name>
</gene>
<evidence type="ECO:0000250" key="1"/>
<evidence type="ECO:0000305" key="2"/>